<keyword id="KW-0328">Glycosyltransferase</keyword>
<keyword id="KW-1185">Reference proteome</keyword>
<keyword id="KW-0808">Transferase</keyword>
<organism>
    <name type="scientific">Arabidopsis thaliana</name>
    <name type="common">Mouse-ear cress</name>
    <dbReference type="NCBI Taxonomy" id="3702"/>
    <lineage>
        <taxon>Eukaryota</taxon>
        <taxon>Viridiplantae</taxon>
        <taxon>Streptophyta</taxon>
        <taxon>Embryophyta</taxon>
        <taxon>Tracheophyta</taxon>
        <taxon>Spermatophyta</taxon>
        <taxon>Magnoliopsida</taxon>
        <taxon>eudicotyledons</taxon>
        <taxon>Gunneridae</taxon>
        <taxon>Pentapetalae</taxon>
        <taxon>rosids</taxon>
        <taxon>malvids</taxon>
        <taxon>Brassicales</taxon>
        <taxon>Brassicaceae</taxon>
        <taxon>Camelineae</taxon>
        <taxon>Arabidopsis</taxon>
    </lineage>
</organism>
<reference key="1">
    <citation type="journal article" date="2000" name="Nature">
        <title>Sequence and analysis of chromosome 1 of the plant Arabidopsis thaliana.</title>
        <authorList>
            <person name="Theologis A."/>
            <person name="Ecker J.R."/>
            <person name="Palm C.J."/>
            <person name="Federspiel N.A."/>
            <person name="Kaul S."/>
            <person name="White O."/>
            <person name="Alonso J."/>
            <person name="Altafi H."/>
            <person name="Araujo R."/>
            <person name="Bowman C.L."/>
            <person name="Brooks S.Y."/>
            <person name="Buehler E."/>
            <person name="Chan A."/>
            <person name="Chao Q."/>
            <person name="Chen H."/>
            <person name="Cheuk R.F."/>
            <person name="Chin C.W."/>
            <person name="Chung M.K."/>
            <person name="Conn L."/>
            <person name="Conway A.B."/>
            <person name="Conway A.R."/>
            <person name="Creasy T.H."/>
            <person name="Dewar K."/>
            <person name="Dunn P."/>
            <person name="Etgu P."/>
            <person name="Feldblyum T.V."/>
            <person name="Feng J.-D."/>
            <person name="Fong B."/>
            <person name="Fujii C.Y."/>
            <person name="Gill J.E."/>
            <person name="Goldsmith A.D."/>
            <person name="Haas B."/>
            <person name="Hansen N.F."/>
            <person name="Hughes B."/>
            <person name="Huizar L."/>
            <person name="Hunter J.L."/>
            <person name="Jenkins J."/>
            <person name="Johnson-Hopson C."/>
            <person name="Khan S."/>
            <person name="Khaykin E."/>
            <person name="Kim C.J."/>
            <person name="Koo H.L."/>
            <person name="Kremenetskaia I."/>
            <person name="Kurtz D.B."/>
            <person name="Kwan A."/>
            <person name="Lam B."/>
            <person name="Langin-Hooper S."/>
            <person name="Lee A."/>
            <person name="Lee J.M."/>
            <person name="Lenz C.A."/>
            <person name="Li J.H."/>
            <person name="Li Y.-P."/>
            <person name="Lin X."/>
            <person name="Liu S.X."/>
            <person name="Liu Z.A."/>
            <person name="Luros J.S."/>
            <person name="Maiti R."/>
            <person name="Marziali A."/>
            <person name="Militscher J."/>
            <person name="Miranda M."/>
            <person name="Nguyen M."/>
            <person name="Nierman W.C."/>
            <person name="Osborne B.I."/>
            <person name="Pai G."/>
            <person name="Peterson J."/>
            <person name="Pham P.K."/>
            <person name="Rizzo M."/>
            <person name="Rooney T."/>
            <person name="Rowley D."/>
            <person name="Sakano H."/>
            <person name="Salzberg S.L."/>
            <person name="Schwartz J.R."/>
            <person name="Shinn P."/>
            <person name="Southwick A.M."/>
            <person name="Sun H."/>
            <person name="Tallon L.J."/>
            <person name="Tambunga G."/>
            <person name="Toriumi M.J."/>
            <person name="Town C.D."/>
            <person name="Utterback T."/>
            <person name="Van Aken S."/>
            <person name="Vaysberg M."/>
            <person name="Vysotskaia V.S."/>
            <person name="Walker M."/>
            <person name="Wu D."/>
            <person name="Yu G."/>
            <person name="Fraser C.M."/>
            <person name="Venter J.C."/>
            <person name="Davis R.W."/>
        </authorList>
    </citation>
    <scope>NUCLEOTIDE SEQUENCE [LARGE SCALE GENOMIC DNA]</scope>
    <source>
        <strain>cv. Columbia</strain>
    </source>
</reference>
<reference key="2">
    <citation type="journal article" date="2017" name="Plant J.">
        <title>Araport11: a complete reannotation of the Arabidopsis thaliana reference genome.</title>
        <authorList>
            <person name="Cheng C.Y."/>
            <person name="Krishnakumar V."/>
            <person name="Chan A.P."/>
            <person name="Thibaud-Nissen F."/>
            <person name="Schobel S."/>
            <person name="Town C.D."/>
        </authorList>
    </citation>
    <scope>GENOME REANNOTATION</scope>
    <source>
        <strain>cv. Columbia</strain>
    </source>
</reference>
<reference key="3">
    <citation type="submission" date="2007-04" db="EMBL/GenBank/DDBJ databases">
        <title>Arabidopsis ORF clones.</title>
        <authorList>
            <person name="Bautista-Mercan V.R."/>
            <person name="Kim C.J."/>
            <person name="Chen H."/>
            <person name="Wu S.Y."/>
            <person name="De Los Reyes C."/>
            <person name="Ecker J.R."/>
        </authorList>
    </citation>
    <scope>NUCLEOTIDE SEQUENCE [LARGE SCALE MRNA]</scope>
    <source>
        <strain>cv. Columbia</strain>
    </source>
</reference>
<reference key="4">
    <citation type="submission" date="2004-09" db="EMBL/GenBank/DDBJ databases">
        <title>Large-scale analysis of RIKEN Arabidopsis full-length (RAFL) cDNAs.</title>
        <authorList>
            <person name="Totoki Y."/>
            <person name="Seki M."/>
            <person name="Ishida J."/>
            <person name="Nakajima M."/>
            <person name="Enju A."/>
            <person name="Kamiya A."/>
            <person name="Narusaka M."/>
            <person name="Shin-i T."/>
            <person name="Nakagawa M."/>
            <person name="Sakamoto N."/>
            <person name="Oishi K."/>
            <person name="Kohara Y."/>
            <person name="Kobayashi M."/>
            <person name="Toyoda A."/>
            <person name="Sakaki Y."/>
            <person name="Sakurai T."/>
            <person name="Iida K."/>
            <person name="Akiyama K."/>
            <person name="Satou M."/>
            <person name="Toyoda T."/>
            <person name="Konagaya A."/>
            <person name="Carninci P."/>
            <person name="Kawai J."/>
            <person name="Hayashizaki Y."/>
            <person name="Shinozaki K."/>
        </authorList>
    </citation>
    <scope>NUCLEOTIDE SEQUENCE [LARGE SCALE MRNA] OF 14-481</scope>
    <source>
        <strain>cv. Columbia</strain>
    </source>
</reference>
<reference key="5">
    <citation type="journal article" date="2001" name="J. Biol. Chem.">
        <title>Phylogenetic analysis of the UDP-glycosyltransferase multigene family of Arabidopsis thaliana.</title>
        <authorList>
            <person name="Li Y."/>
            <person name="Baldauf S."/>
            <person name="Lim E.K."/>
            <person name="Bowles D.J."/>
        </authorList>
    </citation>
    <scope>GENE FAMILY</scope>
</reference>
<reference key="6">
    <citation type="journal article" date="2004" name="Biotechnol. Bioeng.">
        <title>Arabidopsis glycosyltransferases as biocatalysts in fermentation for regioselective synthesis of diverse quercetin glucosides.</title>
        <authorList>
            <person name="Lim E.K."/>
            <person name="Ashford D.A."/>
            <person name="Hou B."/>
            <person name="Jackson R.G."/>
            <person name="Bowles D.J."/>
        </authorList>
    </citation>
    <scope>FUNCTION</scope>
</reference>
<feature type="chain" id="PRO_0000409070" description="UDP-glycosyltransferase 72B3">
    <location>
        <begin position="1"/>
        <end position="481"/>
    </location>
</feature>
<feature type="binding site" evidence="1">
    <location>
        <position position="277"/>
    </location>
    <ligand>
        <name>UDP-alpha-D-glucose</name>
        <dbReference type="ChEBI" id="CHEBI:58885"/>
    </ligand>
</feature>
<feature type="binding site" evidence="1">
    <location>
        <begin position="347"/>
        <end position="349"/>
    </location>
    <ligand>
        <name>UDP-alpha-D-glucose</name>
        <dbReference type="ChEBI" id="CHEBI:58885"/>
    </ligand>
</feature>
<feature type="binding site" evidence="1">
    <location>
        <begin position="364"/>
        <end position="372"/>
    </location>
    <ligand>
        <name>UDP-alpha-D-glucose</name>
        <dbReference type="ChEBI" id="CHEBI:58885"/>
    </ligand>
</feature>
<feature type="binding site" evidence="1">
    <location>
        <begin position="386"/>
        <end position="389"/>
    </location>
    <ligand>
        <name>UDP-alpha-D-glucose</name>
        <dbReference type="ChEBI" id="CHEBI:58885"/>
    </ligand>
</feature>
<name>U72B3_ARATH</name>
<dbReference type="EC" id="2.4.1.-"/>
<dbReference type="EMBL" id="AC023628">
    <property type="protein sequence ID" value="AAF97321.1"/>
    <property type="molecule type" value="Genomic_DNA"/>
</dbReference>
<dbReference type="EMBL" id="CP002684">
    <property type="protein sequence ID" value="AEE27284.1"/>
    <property type="molecule type" value="Genomic_DNA"/>
</dbReference>
<dbReference type="EMBL" id="BT030469">
    <property type="protein sequence ID" value="ABP88123.1"/>
    <property type="molecule type" value="mRNA"/>
</dbReference>
<dbReference type="EMBL" id="AK175504">
    <property type="protein sequence ID" value="BAD43267.1"/>
    <property type="molecule type" value="mRNA"/>
</dbReference>
<dbReference type="PIR" id="G86144">
    <property type="entry name" value="G86144"/>
</dbReference>
<dbReference type="RefSeq" id="NP_171649.1">
    <property type="nucleotide sequence ID" value="NM_100024.2"/>
</dbReference>
<dbReference type="SMR" id="Q9LNI1"/>
<dbReference type="FunCoup" id="Q9LNI1">
    <property type="interactions" value="151"/>
</dbReference>
<dbReference type="STRING" id="3702.Q9LNI1"/>
<dbReference type="CAZy" id="GT1">
    <property type="family name" value="Glycosyltransferase Family 1"/>
</dbReference>
<dbReference type="PaxDb" id="3702-AT1G01420.1"/>
<dbReference type="ProteomicsDB" id="228522"/>
<dbReference type="DNASU" id="837503"/>
<dbReference type="EnsemblPlants" id="AT1G01420.1">
    <property type="protein sequence ID" value="AT1G01420.1"/>
    <property type="gene ID" value="AT1G01420"/>
</dbReference>
<dbReference type="GeneID" id="837503"/>
<dbReference type="Gramene" id="AT1G01420.1">
    <property type="protein sequence ID" value="AT1G01420.1"/>
    <property type="gene ID" value="AT1G01420"/>
</dbReference>
<dbReference type="KEGG" id="ath:AT1G01420"/>
<dbReference type="Araport" id="AT1G01420"/>
<dbReference type="TAIR" id="AT1G01420">
    <property type="gene designation" value="UGT72B3"/>
</dbReference>
<dbReference type="eggNOG" id="KOG1192">
    <property type="taxonomic scope" value="Eukaryota"/>
</dbReference>
<dbReference type="HOGENOM" id="CLU_001724_3_0_1"/>
<dbReference type="InParanoid" id="Q9LNI1"/>
<dbReference type="PhylomeDB" id="Q9LNI1"/>
<dbReference type="PRO" id="PR:Q9LNI1"/>
<dbReference type="Proteomes" id="UP000006548">
    <property type="component" value="Chromosome 1"/>
</dbReference>
<dbReference type="ExpressionAtlas" id="Q9LNI1">
    <property type="expression patterns" value="baseline and differential"/>
</dbReference>
<dbReference type="GO" id="GO:0005783">
    <property type="term" value="C:endoplasmic reticulum"/>
    <property type="evidence" value="ECO:0000314"/>
    <property type="project" value="TAIR"/>
</dbReference>
<dbReference type="GO" id="GO:0080043">
    <property type="term" value="F:quercetin 3-O-glucosyltransferase activity"/>
    <property type="evidence" value="ECO:0000314"/>
    <property type="project" value="TAIR"/>
</dbReference>
<dbReference type="CDD" id="cd03784">
    <property type="entry name" value="GT1_Gtf-like"/>
    <property type="match status" value="1"/>
</dbReference>
<dbReference type="FunFam" id="3.40.50.2000:FF:000051">
    <property type="entry name" value="Glycosyltransferase"/>
    <property type="match status" value="1"/>
</dbReference>
<dbReference type="FunFam" id="3.40.50.2000:FF:000054">
    <property type="entry name" value="Glycosyltransferase"/>
    <property type="match status" value="1"/>
</dbReference>
<dbReference type="Gene3D" id="3.40.50.2000">
    <property type="entry name" value="Glycogen Phosphorylase B"/>
    <property type="match status" value="2"/>
</dbReference>
<dbReference type="InterPro" id="IPR002213">
    <property type="entry name" value="UDP_glucos_trans"/>
</dbReference>
<dbReference type="InterPro" id="IPR035595">
    <property type="entry name" value="UDP_glycos_trans_CS"/>
</dbReference>
<dbReference type="PANTHER" id="PTHR48046:SF6">
    <property type="entry name" value="GLYCOSYLTRANSFERASE"/>
    <property type="match status" value="1"/>
</dbReference>
<dbReference type="PANTHER" id="PTHR48046">
    <property type="entry name" value="UDP-GLYCOSYLTRANSFERASE 72E1"/>
    <property type="match status" value="1"/>
</dbReference>
<dbReference type="Pfam" id="PF00201">
    <property type="entry name" value="UDPGT"/>
    <property type="match status" value="1"/>
</dbReference>
<dbReference type="SUPFAM" id="SSF53756">
    <property type="entry name" value="UDP-Glycosyltransferase/glycogen phosphorylase"/>
    <property type="match status" value="1"/>
</dbReference>
<dbReference type="PROSITE" id="PS00375">
    <property type="entry name" value="UDPGT"/>
    <property type="match status" value="1"/>
</dbReference>
<evidence type="ECO:0000250" key="1"/>
<evidence type="ECO:0000269" key="2">
    <source>
    </source>
</evidence>
<evidence type="ECO:0000305" key="3"/>
<gene>
    <name type="primary">UGT72B3</name>
    <name type="ordered locus">At1g01420</name>
    <name type="ORF">F6F3.22</name>
</gene>
<comment type="function">
    <text evidence="2">Possesses low quercetin 3-O-glucosyltransferase activity in vitro.</text>
</comment>
<comment type="similarity">
    <text evidence="3">Belongs to the UDP-glycosyltransferase family.</text>
</comment>
<accession>Q9LNI1</accession>
<accession>Q681W3</accession>
<sequence length="481" mass="52784">MADGNTPHVAIIPSPGIGHLIPLVELAKRLLDNHGFTVTFIIPGDSPPSKAQRSVLNSLPSSIASVFLPPADLSDVPSTARIETRISLTVTRSNPALRELFGSLSAEKRLPAVLVVDLFGTDAFDVAAEFHVSPYIFYASNANVLTFLLHLPKLDETVSCEFRELTEPVIIPGCVPITGKDFVDPCQDRKDESYKWLLHNVKRFKEAEGILVNSFVDLEPNTIKIVQEPAPDKPPVYLIGPLVNSGSHDADVNDEYKCLNWLDNQPFGSVLYVSFGSGGTLTFEQFIELALGLAESGKRFLWVIRSPSGIASSSYFNPQSRNDPFSFLPQGFLDRTKEKGLVVGSWAPQAQILTHTSIGGFLTHCGWNSSLESIVNGVPLIAWPLYAEQKMNALLLVDVGAALRARLGEDGVVGREEVARVVKGLIEGEEGNAVRKKMKELKEGSVRVLRDDGFSTKSLNEVSLKWKAHQRKIDQEQESFL</sequence>
<proteinExistence type="evidence at transcript level"/>
<protein>
    <recommendedName>
        <fullName>UDP-glycosyltransferase 72B3</fullName>
        <ecNumber>2.4.1.-</ecNumber>
    </recommendedName>
</protein>